<accession>B9WJ16</accession>
<comment type="function">
    <text evidence="1">Regulates mitochondrial small subunit maturation by controlling 15S rRNA 5'-end processing. Localizes to the 5' precursor of the 15S rRNA in a position that is subsequently occupied by mS47 in the mature yeast mtSSU. Uses structure and sequence-specific RNA recognition, binding to a single-stranded region of the precursor and specifically recognizing bases -6 to -1. The exchange of Ccm1 for mS47 is coupled to the irreversible removal of precursor rRNA that is accompanied by conformational changes of the mitoribosomal proteins uS5m and mS26. These conformational changes signal completion of 5'-end rRNA processing through protection of the mature 5'-end of the 15S rRNA and stabilization of mS47. The removal of the 5' precursor together with the dissociation of Ccm1 may be catalyzed by the 5'-3' exoribonuclease Pet127. Involved in the specific removal of group I introns in mitochondrial encoded transcripts.</text>
</comment>
<comment type="subunit">
    <text evidence="1">Binds to mitochondrial small subunit 15S rRNA.</text>
</comment>
<comment type="subcellular location">
    <subcellularLocation>
        <location evidence="1">Mitochondrion</location>
    </subcellularLocation>
</comment>
<comment type="miscellaneous">
    <text evidence="1">Involved in mitochondrial-nuclear incompatibility, a major determinant in reproductive isolation between species, through hybrid incompatibility of Ccm1 and its interacting partner 15S rRNA between yeast species.</text>
</comment>
<comment type="similarity">
    <text evidence="5">Belongs to the CCM1 family.</text>
</comment>
<gene>
    <name type="primary">CCM1</name>
    <name type="ORF">CD36_63520</name>
</gene>
<proteinExistence type="inferred from homology"/>
<dbReference type="EMBL" id="FM992693">
    <property type="protein sequence ID" value="CAX41235.1"/>
    <property type="molecule type" value="Genomic_DNA"/>
</dbReference>
<dbReference type="RefSeq" id="XP_002421078.1">
    <property type="nucleotide sequence ID" value="XM_002421033.1"/>
</dbReference>
<dbReference type="SMR" id="B9WJ16"/>
<dbReference type="GeneID" id="8048700"/>
<dbReference type="KEGG" id="cdu:CD36_63520"/>
<dbReference type="CGD" id="CAL0000171461">
    <property type="gene designation" value="Cd36_63520"/>
</dbReference>
<dbReference type="VEuPathDB" id="FungiDB:CD36_63520"/>
<dbReference type="eggNOG" id="ENOG502QUX2">
    <property type="taxonomic scope" value="Eukaryota"/>
</dbReference>
<dbReference type="HOGENOM" id="CLU_019745_0_0_1"/>
<dbReference type="OrthoDB" id="185373at2759"/>
<dbReference type="Proteomes" id="UP000002605">
    <property type="component" value="Chromosome 6"/>
</dbReference>
<dbReference type="GO" id="GO:0005739">
    <property type="term" value="C:mitochondrion"/>
    <property type="evidence" value="ECO:0007669"/>
    <property type="project" value="UniProtKB-SubCell"/>
</dbReference>
<dbReference type="GO" id="GO:0006397">
    <property type="term" value="P:mRNA processing"/>
    <property type="evidence" value="ECO:0007669"/>
    <property type="project" value="UniProtKB-KW"/>
</dbReference>
<dbReference type="GO" id="GO:0008380">
    <property type="term" value="P:RNA splicing"/>
    <property type="evidence" value="ECO:0007669"/>
    <property type="project" value="UniProtKB-KW"/>
</dbReference>
<dbReference type="Gene3D" id="1.25.40.10">
    <property type="entry name" value="Tetratricopeptide repeat domain"/>
    <property type="match status" value="1"/>
</dbReference>
<dbReference type="InterPro" id="IPR002885">
    <property type="entry name" value="Pentatricopeptide_rpt"/>
</dbReference>
<dbReference type="InterPro" id="IPR011990">
    <property type="entry name" value="TPR-like_helical_dom_sf"/>
</dbReference>
<dbReference type="PANTHER" id="PTHR47447">
    <property type="entry name" value="OS03G0856100 PROTEIN"/>
    <property type="match status" value="1"/>
</dbReference>
<dbReference type="PANTHER" id="PTHR47447:SF17">
    <property type="entry name" value="OS12G0638900 PROTEIN"/>
    <property type="match status" value="1"/>
</dbReference>
<dbReference type="Pfam" id="PF01535">
    <property type="entry name" value="PPR"/>
    <property type="match status" value="1"/>
</dbReference>
<dbReference type="PROSITE" id="PS51375">
    <property type="entry name" value="PPR"/>
    <property type="match status" value="6"/>
</dbReference>
<protein>
    <recommendedName>
        <fullName>Mitochondrial 15S rRNA processing factor CCM1</fullName>
    </recommendedName>
</protein>
<reference key="1">
    <citation type="journal article" date="2009" name="Genome Res.">
        <title>Comparative genomics of the fungal pathogens Candida dubliniensis and Candida albicans.</title>
        <authorList>
            <person name="Jackson A.P."/>
            <person name="Gamble J.A."/>
            <person name="Yeomans T."/>
            <person name="Moran G.P."/>
            <person name="Saunders D."/>
            <person name="Harris D."/>
            <person name="Aslett M."/>
            <person name="Barrell J.F."/>
            <person name="Butler G."/>
            <person name="Citiulo F."/>
            <person name="Coleman D.C."/>
            <person name="de Groot P.W.J."/>
            <person name="Goodwin T.J."/>
            <person name="Quail M.A."/>
            <person name="McQuillan J."/>
            <person name="Munro C.A."/>
            <person name="Pain A."/>
            <person name="Poulter R.T."/>
            <person name="Rajandream M.A."/>
            <person name="Renauld H."/>
            <person name="Spiering M.J."/>
            <person name="Tivey A."/>
            <person name="Gow N.A.R."/>
            <person name="Barrell B."/>
            <person name="Sullivan D.J."/>
            <person name="Berriman M."/>
        </authorList>
    </citation>
    <scope>NUCLEOTIDE SEQUENCE [LARGE SCALE GENOMIC DNA]</scope>
    <source>
        <strain>CD36 / ATCC MYA-646 / CBS 7987 / NCPF 3949 / NRRL Y-17841</strain>
    </source>
</reference>
<keyword id="KW-0496">Mitochondrion</keyword>
<keyword id="KW-0507">mRNA processing</keyword>
<keyword id="KW-0508">mRNA splicing</keyword>
<keyword id="KW-0677">Repeat</keyword>
<keyword id="KW-0809">Transit peptide</keyword>
<sequence length="765" mass="87981">MIRLIRGNNVPSLVFKRSLFVPSNSLTNKRKRRIPPLKPRSSNKEGGDIKQSRITDRNQTSRTVGVSEKLPTQIKKELKDLRSFTKVIAQHLKPEQENDSLTSAEKPDTSQLPPIDIEEATDDIFGQISGTKKSSVEVAPPPPPPGLDIPDEIKERLGLLSELLVPEKSSNSKLPEKQVENNWKLLLSQLDQAGGLSGLSKRTISKFFSKIPPKNLKGLIPIIENMYNKAEMSIPHPIYYMFVRSLTLGDKISDTQMQLIDKYFQEISKQTDLKIDHYETMILAQVKNNHMEKIDGILALMKTKNIEISKMIYTSIVRGYIFYQKDHQKALETFDSMKFLSQKTQPDEKVYTDVIVSCIMHREIEKALDLYYELKDKGMNVNQNLLSTLAKGCSRSKQFKTQAWNFLFQIYDHGWVPNLQTYEHMLYIAARDGDVELTRALFYKMLQTNSVTVRAFRYLILSYSKYVPPHKRKERYLILLNHKGQLFRENILQDVDFSKPIHGFPFLPSSHIPDSKFVLAESSAIWAHTVMNNPSFLRQQTLVASYVSIALELDDFTEFKNRFNSASYLNKDGIPKVREIEIIEPQQDEPTETVTATEQQNTSSNTSVIRSPILNQLQQNINDNQFKAPRDSYLYNLAIKAAGKFKNYGFAQEILHERGQFRKSNSFKSLSPKQQHQDDFQFAGYLVECWTNMNLLEDAYAVVLSSIDRFPWSWRELGVLNNAAMKLGSLELAEAVRKVAQVTQVKHHGKIKRQDFKTYVMKRGY</sequence>
<evidence type="ECO:0000250" key="1">
    <source>
        <dbReference type="UniProtKB" id="P48237"/>
    </source>
</evidence>
<evidence type="ECO:0000255" key="2"/>
<evidence type="ECO:0000255" key="3">
    <source>
        <dbReference type="PROSITE-ProRule" id="PRU00708"/>
    </source>
</evidence>
<evidence type="ECO:0000256" key="4">
    <source>
        <dbReference type="SAM" id="MobiDB-lite"/>
    </source>
</evidence>
<evidence type="ECO:0000305" key="5"/>
<feature type="transit peptide" description="Mitochondrion" evidence="2">
    <location>
        <begin position="1"/>
        <end position="63"/>
    </location>
</feature>
<feature type="chain" id="PRO_0000402258" description="Mitochondrial 15S rRNA processing factor CCM1" evidence="2">
    <location>
        <begin position="64"/>
        <end position="765"/>
    </location>
</feature>
<feature type="repeat" description="PPR 1" evidence="3">
    <location>
        <begin position="274"/>
        <end position="308"/>
    </location>
</feature>
<feature type="repeat" description="PPR 2" evidence="3">
    <location>
        <begin position="309"/>
        <end position="344"/>
    </location>
</feature>
<feature type="repeat" description="PPR 3" evidence="3">
    <location>
        <begin position="347"/>
        <end position="381"/>
    </location>
</feature>
<feature type="repeat" description="PPR 4" evidence="3">
    <location>
        <begin position="382"/>
        <end position="417"/>
    </location>
</feature>
<feature type="repeat" description="PPR 5" evidence="3">
    <location>
        <begin position="418"/>
        <end position="452"/>
    </location>
</feature>
<feature type="repeat" description="PPR 6" evidence="3">
    <location>
        <begin position="631"/>
        <end position="661"/>
    </location>
</feature>
<feature type="region of interest" description="Disordered" evidence="4">
    <location>
        <begin position="26"/>
        <end position="67"/>
    </location>
</feature>
<feature type="region of interest" description="Disordered" evidence="4">
    <location>
        <begin position="92"/>
        <end position="114"/>
    </location>
</feature>
<feature type="region of interest" description="Disordered" evidence="4">
    <location>
        <begin position="585"/>
        <end position="609"/>
    </location>
</feature>
<feature type="compositionally biased region" description="Basic and acidic residues" evidence="4">
    <location>
        <begin position="42"/>
        <end position="56"/>
    </location>
</feature>
<feature type="compositionally biased region" description="Polar residues" evidence="4">
    <location>
        <begin position="592"/>
        <end position="609"/>
    </location>
</feature>
<name>CCM1_CANDC</name>
<organism>
    <name type="scientific">Candida dubliniensis (strain CD36 / ATCC MYA-646 / CBS 7987 / NCPF 3949 / NRRL Y-17841)</name>
    <name type="common">Yeast</name>
    <dbReference type="NCBI Taxonomy" id="573826"/>
    <lineage>
        <taxon>Eukaryota</taxon>
        <taxon>Fungi</taxon>
        <taxon>Dikarya</taxon>
        <taxon>Ascomycota</taxon>
        <taxon>Saccharomycotina</taxon>
        <taxon>Pichiomycetes</taxon>
        <taxon>Debaryomycetaceae</taxon>
        <taxon>Candida/Lodderomyces clade</taxon>
        <taxon>Candida</taxon>
    </lineage>
</organism>